<protein>
    <recommendedName>
        <fullName evidence="1">Large ribosomal subunit protein uL30</fullName>
    </recommendedName>
    <alternativeName>
        <fullName evidence="2">50S ribosomal protein L30</fullName>
    </alternativeName>
</protein>
<accession>Q6LXD2</accession>
<reference key="1">
    <citation type="journal article" date="2004" name="J. Bacteriol.">
        <title>Complete genome sequence of the genetically tractable hydrogenotrophic methanogen Methanococcus maripaludis.</title>
        <authorList>
            <person name="Hendrickson E.L."/>
            <person name="Kaul R."/>
            <person name="Zhou Y."/>
            <person name="Bovee D."/>
            <person name="Chapman P."/>
            <person name="Chung J."/>
            <person name="Conway de Macario E."/>
            <person name="Dodsworth J.A."/>
            <person name="Gillett W."/>
            <person name="Graham D.E."/>
            <person name="Hackett M."/>
            <person name="Haydock A.K."/>
            <person name="Kang A."/>
            <person name="Land M.L."/>
            <person name="Levy R."/>
            <person name="Lie T.J."/>
            <person name="Major T.A."/>
            <person name="Moore B.C."/>
            <person name="Porat I."/>
            <person name="Palmeiri A."/>
            <person name="Rouse G."/>
            <person name="Saenphimmachak C."/>
            <person name="Soell D."/>
            <person name="Van Dien S."/>
            <person name="Wang T."/>
            <person name="Whitman W.B."/>
            <person name="Xia Q."/>
            <person name="Zhang Y."/>
            <person name="Larimer F.W."/>
            <person name="Olson M.V."/>
            <person name="Leigh J.A."/>
        </authorList>
    </citation>
    <scope>NUCLEOTIDE SEQUENCE [LARGE SCALE GENOMIC DNA]</scope>
    <source>
        <strain>DSM 14266 / JCM 13030 / NBRC 101832 / S2 / LL</strain>
    </source>
</reference>
<keyword id="KW-1185">Reference proteome</keyword>
<keyword id="KW-0687">Ribonucleoprotein</keyword>
<keyword id="KW-0689">Ribosomal protein</keyword>
<comment type="subunit">
    <text evidence="1">Part of the 50S ribosomal subunit.</text>
</comment>
<comment type="similarity">
    <text evidence="1">Belongs to the universal ribosomal protein uL30 family.</text>
</comment>
<feature type="chain" id="PRO_0000273903" description="Large ribosomal subunit protein uL30">
    <location>
        <begin position="1"/>
        <end position="154"/>
    </location>
</feature>
<gene>
    <name evidence="1" type="primary">rpl30</name>
    <name type="ordered locus">MMP1420</name>
</gene>
<sequence length="154" mass="17269">MAYAVVRVRGSVGVRGDIADTMKMLRLHRVNHCVIIPDTEHYTGMIKKVKDYVTYGEIDKDTLVALILKRGRLPGNKRLSEELVKELTELPVEELAEKVIAGEIKIKDTPIKPVFRLHPPRKGYDRAGVKKGFSIGGALGYRSGKINDLLNKMM</sequence>
<dbReference type="EMBL" id="BX950229">
    <property type="protein sequence ID" value="CAF30976.1"/>
    <property type="molecule type" value="Genomic_DNA"/>
</dbReference>
<dbReference type="RefSeq" id="WP_011171364.1">
    <property type="nucleotide sequence ID" value="NC_005791.1"/>
</dbReference>
<dbReference type="SMR" id="Q6LXD2"/>
<dbReference type="STRING" id="267377.MMP1420"/>
<dbReference type="EnsemblBacteria" id="CAF30976">
    <property type="protein sequence ID" value="CAF30976"/>
    <property type="gene ID" value="MMP1420"/>
</dbReference>
<dbReference type="KEGG" id="mmp:MMP1420"/>
<dbReference type="PATRIC" id="fig|267377.15.peg.1456"/>
<dbReference type="eggNOG" id="arCOG04086">
    <property type="taxonomic scope" value="Archaea"/>
</dbReference>
<dbReference type="HOGENOM" id="CLU_055156_6_0_2"/>
<dbReference type="OrthoDB" id="6379at2157"/>
<dbReference type="Proteomes" id="UP000000590">
    <property type="component" value="Chromosome"/>
</dbReference>
<dbReference type="GO" id="GO:0022625">
    <property type="term" value="C:cytosolic large ribosomal subunit"/>
    <property type="evidence" value="ECO:0007669"/>
    <property type="project" value="TreeGrafter"/>
</dbReference>
<dbReference type="GO" id="GO:0003723">
    <property type="term" value="F:RNA binding"/>
    <property type="evidence" value="ECO:0007669"/>
    <property type="project" value="TreeGrafter"/>
</dbReference>
<dbReference type="GO" id="GO:0003735">
    <property type="term" value="F:structural constituent of ribosome"/>
    <property type="evidence" value="ECO:0007669"/>
    <property type="project" value="InterPro"/>
</dbReference>
<dbReference type="GO" id="GO:0000463">
    <property type="term" value="P:maturation of LSU-rRNA from tricistronic rRNA transcript (SSU-rRNA, 5.8S rRNA, LSU-rRNA)"/>
    <property type="evidence" value="ECO:0007669"/>
    <property type="project" value="TreeGrafter"/>
</dbReference>
<dbReference type="GO" id="GO:0006412">
    <property type="term" value="P:translation"/>
    <property type="evidence" value="ECO:0007669"/>
    <property type="project" value="UniProtKB-UniRule"/>
</dbReference>
<dbReference type="CDD" id="cd01657">
    <property type="entry name" value="Ribosomal_L7_archeal_euk"/>
    <property type="match status" value="1"/>
</dbReference>
<dbReference type="Gene3D" id="1.10.15.30">
    <property type="match status" value="1"/>
</dbReference>
<dbReference type="Gene3D" id="3.30.1390.20">
    <property type="entry name" value="Ribosomal protein L30, ferredoxin-like fold domain"/>
    <property type="match status" value="1"/>
</dbReference>
<dbReference type="HAMAP" id="MF_01371_A">
    <property type="entry name" value="Ribosomal_uL30_A"/>
    <property type="match status" value="1"/>
</dbReference>
<dbReference type="InterPro" id="IPR036919">
    <property type="entry name" value="Ribo_uL30_ferredoxin-like_sf"/>
</dbReference>
<dbReference type="InterPro" id="IPR039699">
    <property type="entry name" value="Ribosomal_uL30"/>
</dbReference>
<dbReference type="InterPro" id="IPR005997">
    <property type="entry name" value="Ribosomal_uL30_arc"/>
</dbReference>
<dbReference type="InterPro" id="IPR018038">
    <property type="entry name" value="Ribosomal_uL30_CS"/>
</dbReference>
<dbReference type="InterPro" id="IPR035808">
    <property type="entry name" value="Ribosomal_uL30_euk_arc"/>
</dbReference>
<dbReference type="InterPro" id="IPR016082">
    <property type="entry name" value="Ribosomal_uL30_ferredoxin-like"/>
</dbReference>
<dbReference type="NCBIfam" id="NF004711">
    <property type="entry name" value="PRK06049.1"/>
    <property type="match status" value="1"/>
</dbReference>
<dbReference type="NCBIfam" id="TIGR01309">
    <property type="entry name" value="uL30_arch"/>
    <property type="match status" value="1"/>
</dbReference>
<dbReference type="PANTHER" id="PTHR11524">
    <property type="entry name" value="60S RIBOSOMAL PROTEIN L7"/>
    <property type="match status" value="1"/>
</dbReference>
<dbReference type="PANTHER" id="PTHR11524:SF16">
    <property type="entry name" value="LARGE RIBOSOMAL SUBUNIT PROTEIN UL30"/>
    <property type="match status" value="1"/>
</dbReference>
<dbReference type="Pfam" id="PF00327">
    <property type="entry name" value="Ribosomal_L30"/>
    <property type="match status" value="1"/>
</dbReference>
<dbReference type="SUPFAM" id="SSF55129">
    <property type="entry name" value="Ribosomal protein L30p/L7e"/>
    <property type="match status" value="1"/>
</dbReference>
<dbReference type="PROSITE" id="PS00634">
    <property type="entry name" value="RIBOSOMAL_L30"/>
    <property type="match status" value="1"/>
</dbReference>
<proteinExistence type="inferred from homology"/>
<evidence type="ECO:0000255" key="1">
    <source>
        <dbReference type="HAMAP-Rule" id="MF_01371"/>
    </source>
</evidence>
<evidence type="ECO:0000305" key="2"/>
<name>RL30_METMP</name>
<organism>
    <name type="scientific">Methanococcus maripaludis (strain DSM 14266 / JCM 13030 / NBRC 101832 / S2 / LL)</name>
    <dbReference type="NCBI Taxonomy" id="267377"/>
    <lineage>
        <taxon>Archaea</taxon>
        <taxon>Methanobacteriati</taxon>
        <taxon>Methanobacteriota</taxon>
        <taxon>Methanomada group</taxon>
        <taxon>Methanococci</taxon>
        <taxon>Methanococcales</taxon>
        <taxon>Methanococcaceae</taxon>
        <taxon>Methanococcus</taxon>
    </lineage>
</organism>